<reference key="1">
    <citation type="journal article" date="1997" name="Nature">
        <title>The nucleotide sequence of Saccharomyces cerevisiae chromosome XV.</title>
        <authorList>
            <person name="Dujon B."/>
            <person name="Albermann K."/>
            <person name="Aldea M."/>
            <person name="Alexandraki D."/>
            <person name="Ansorge W."/>
            <person name="Arino J."/>
            <person name="Benes V."/>
            <person name="Bohn C."/>
            <person name="Bolotin-Fukuhara M."/>
            <person name="Bordonne R."/>
            <person name="Boyer J."/>
            <person name="Camasses A."/>
            <person name="Casamayor A."/>
            <person name="Casas C."/>
            <person name="Cheret G."/>
            <person name="Cziepluch C."/>
            <person name="Daignan-Fornier B."/>
            <person name="Dang V.-D."/>
            <person name="de Haan M."/>
            <person name="Delius H."/>
            <person name="Durand P."/>
            <person name="Fairhead C."/>
            <person name="Feldmann H."/>
            <person name="Gaillon L."/>
            <person name="Galisson F."/>
            <person name="Gamo F.-J."/>
            <person name="Gancedo C."/>
            <person name="Goffeau A."/>
            <person name="Goulding S.E."/>
            <person name="Grivell L.A."/>
            <person name="Habbig B."/>
            <person name="Hand N.J."/>
            <person name="Hani J."/>
            <person name="Hattenhorst U."/>
            <person name="Hebling U."/>
            <person name="Hernando Y."/>
            <person name="Herrero E."/>
            <person name="Heumann K."/>
            <person name="Hiesel R."/>
            <person name="Hilger F."/>
            <person name="Hofmann B."/>
            <person name="Hollenberg C.P."/>
            <person name="Hughes B."/>
            <person name="Jauniaux J.-C."/>
            <person name="Kalogeropoulos A."/>
            <person name="Katsoulou C."/>
            <person name="Kordes E."/>
            <person name="Lafuente M.J."/>
            <person name="Landt O."/>
            <person name="Louis E.J."/>
            <person name="Maarse A.C."/>
            <person name="Madania A."/>
            <person name="Mannhaupt G."/>
            <person name="Marck C."/>
            <person name="Martin R.P."/>
            <person name="Mewes H.-W."/>
            <person name="Michaux G."/>
            <person name="Paces V."/>
            <person name="Parle-McDermott A.G."/>
            <person name="Pearson B.M."/>
            <person name="Perrin A."/>
            <person name="Pettersson B."/>
            <person name="Poch O."/>
            <person name="Pohl T.M."/>
            <person name="Poirey R."/>
            <person name="Portetelle D."/>
            <person name="Pujol A."/>
            <person name="Purnelle B."/>
            <person name="Ramezani Rad M."/>
            <person name="Rechmann S."/>
            <person name="Schwager C."/>
            <person name="Schweizer M."/>
            <person name="Sor F."/>
            <person name="Sterky F."/>
            <person name="Tarassov I.A."/>
            <person name="Teodoru C."/>
            <person name="Tettelin H."/>
            <person name="Thierry A."/>
            <person name="Tobiasch E."/>
            <person name="Tzermia M."/>
            <person name="Uhlen M."/>
            <person name="Unseld M."/>
            <person name="Valens M."/>
            <person name="Vandenbol M."/>
            <person name="Vetter I."/>
            <person name="Vlcek C."/>
            <person name="Voet M."/>
            <person name="Volckaert G."/>
            <person name="Voss H."/>
            <person name="Wambutt R."/>
            <person name="Wedler H."/>
            <person name="Wiemann S."/>
            <person name="Winsor B."/>
            <person name="Wolfe K.H."/>
            <person name="Zollner A."/>
            <person name="Zumstein E."/>
            <person name="Kleine K."/>
        </authorList>
    </citation>
    <scope>NUCLEOTIDE SEQUENCE [LARGE SCALE GENOMIC DNA]</scope>
    <source>
        <strain>ATCC 204508 / S288c</strain>
    </source>
</reference>
<reference key="2">
    <citation type="journal article" date="2014" name="G3 (Bethesda)">
        <title>The reference genome sequence of Saccharomyces cerevisiae: Then and now.</title>
        <authorList>
            <person name="Engel S.R."/>
            <person name="Dietrich F.S."/>
            <person name="Fisk D.G."/>
            <person name="Binkley G."/>
            <person name="Balakrishnan R."/>
            <person name="Costanzo M.C."/>
            <person name="Dwight S.S."/>
            <person name="Hitz B.C."/>
            <person name="Karra K."/>
            <person name="Nash R.S."/>
            <person name="Weng S."/>
            <person name="Wong E.D."/>
            <person name="Lloyd P."/>
            <person name="Skrzypek M.S."/>
            <person name="Miyasato S.R."/>
            <person name="Simison M."/>
            <person name="Cherry J.M."/>
        </authorList>
    </citation>
    <scope>GENOME REANNOTATION</scope>
    <source>
        <strain>ATCC 204508 / S288c</strain>
    </source>
</reference>
<accession>Q08621</accession>
<organism>
    <name type="scientific">Saccharomyces cerevisiae (strain ATCC 204508 / S288c)</name>
    <name type="common">Baker's yeast</name>
    <dbReference type="NCBI Taxonomy" id="559292"/>
    <lineage>
        <taxon>Eukaryota</taxon>
        <taxon>Fungi</taxon>
        <taxon>Dikarya</taxon>
        <taxon>Ascomycota</taxon>
        <taxon>Saccharomycotina</taxon>
        <taxon>Saccharomycetes</taxon>
        <taxon>Saccharomycetales</taxon>
        <taxon>Saccharomycetaceae</taxon>
        <taxon>Saccharomyces</taxon>
    </lineage>
</organism>
<comment type="miscellaneous">
    <text evidence="1">Partially overlaps DED1.</text>
</comment>
<comment type="caution">
    <text evidence="2">Product of a dubious gene prediction unlikely to encode a functional protein. Because of that it is not part of the S.cerevisiae S288c complete/reference proteome set.</text>
</comment>
<gene>
    <name type="ordered locus">YOR203W</name>
    <name type="ORF">O4833</name>
</gene>
<dbReference type="EMBL" id="Z75110">
    <property type="protein sequence ID" value="CAA99418.1"/>
    <property type="molecule type" value="Genomic_DNA"/>
</dbReference>
<dbReference type="PIR" id="S67095">
    <property type="entry name" value="S67095"/>
</dbReference>
<dbReference type="STRING" id="4932.YOR203W"/>
<dbReference type="PaxDb" id="4932-YOR203W"/>
<dbReference type="EnsemblFungi" id="YOR203W_mRNA">
    <property type="protein sequence ID" value="YOR203W"/>
    <property type="gene ID" value="YOR203W"/>
</dbReference>
<dbReference type="AGR" id="SGD:S000005729"/>
<dbReference type="SGD" id="S000005729">
    <property type="gene designation" value="YOR203W"/>
</dbReference>
<dbReference type="HOGENOM" id="CLU_2086673_0_0_1"/>
<protein>
    <recommendedName>
        <fullName>Putative uncharacterized protein YOR203W</fullName>
    </recommendedName>
</protein>
<feature type="chain" id="PRO_0000299724" description="Putative uncharacterized protein YOR203W">
    <location>
        <begin position="1"/>
        <end position="117"/>
    </location>
</feature>
<evidence type="ECO:0000305" key="1"/>
<evidence type="ECO:0000305" key="2">
    <source>
    </source>
</evidence>
<name>YO201_YEAST</name>
<sequence length="117" mass="14191">MVPTMFPPPKVFLCSDTDYLKLQHTIYIHVYICIPMNVSKYVYEQYDTEDDKVMHHSIRVILNEARFPFFFLLFLFFSLELEKKNIKEMEEREKVSCGDRWQVVFRKNNKKSISYYG</sequence>
<proteinExistence type="uncertain"/>